<reference key="1">
    <citation type="journal article" date="2004" name="Proc. Natl. Acad. Sci. U.S.A.">
        <title>Insights into the evolution of Yersinia pestis through whole-genome comparison with Yersinia pseudotuberculosis.</title>
        <authorList>
            <person name="Chain P.S.G."/>
            <person name="Carniel E."/>
            <person name="Larimer F.W."/>
            <person name="Lamerdin J."/>
            <person name="Stoutland P.O."/>
            <person name="Regala W.M."/>
            <person name="Georgescu A.M."/>
            <person name="Vergez L.M."/>
            <person name="Land M.L."/>
            <person name="Motin V.L."/>
            <person name="Brubaker R.R."/>
            <person name="Fowler J."/>
            <person name="Hinnebusch J."/>
            <person name="Marceau M."/>
            <person name="Medigue C."/>
            <person name="Simonet M."/>
            <person name="Chenal-Francisque V."/>
            <person name="Souza B."/>
            <person name="Dacheux D."/>
            <person name="Elliott J.M."/>
            <person name="Derbise A."/>
            <person name="Hauser L.J."/>
            <person name="Garcia E."/>
        </authorList>
    </citation>
    <scope>NUCLEOTIDE SEQUENCE [LARGE SCALE GENOMIC DNA]</scope>
    <source>
        <strain>IP32953</strain>
    </source>
</reference>
<name>APAG_YERPS</name>
<organism>
    <name type="scientific">Yersinia pseudotuberculosis serotype I (strain IP32953)</name>
    <dbReference type="NCBI Taxonomy" id="273123"/>
    <lineage>
        <taxon>Bacteria</taxon>
        <taxon>Pseudomonadati</taxon>
        <taxon>Pseudomonadota</taxon>
        <taxon>Gammaproteobacteria</taxon>
        <taxon>Enterobacterales</taxon>
        <taxon>Yersiniaceae</taxon>
        <taxon>Yersinia</taxon>
    </lineage>
</organism>
<protein>
    <recommendedName>
        <fullName evidence="1">Protein ApaG</fullName>
    </recommendedName>
</protein>
<accession>Q66EQ9</accession>
<evidence type="ECO:0000255" key="1">
    <source>
        <dbReference type="HAMAP-Rule" id="MF_00791"/>
    </source>
</evidence>
<dbReference type="EMBL" id="BX936398">
    <property type="protein sequence ID" value="CAH19872.1"/>
    <property type="molecule type" value="Genomic_DNA"/>
</dbReference>
<dbReference type="RefSeq" id="WP_011191709.1">
    <property type="nucleotide sequence ID" value="NC_006155.1"/>
</dbReference>
<dbReference type="SMR" id="Q66EQ9"/>
<dbReference type="GeneID" id="49787365"/>
<dbReference type="KEGG" id="ypo:BZ17_1925"/>
<dbReference type="KEGG" id="yps:YPTB0632"/>
<dbReference type="PATRIC" id="fig|273123.14.peg.2045"/>
<dbReference type="Proteomes" id="UP000001011">
    <property type="component" value="Chromosome"/>
</dbReference>
<dbReference type="GO" id="GO:0070987">
    <property type="term" value="P:error-free translesion synthesis"/>
    <property type="evidence" value="ECO:0007669"/>
    <property type="project" value="TreeGrafter"/>
</dbReference>
<dbReference type="Gene3D" id="2.60.40.1470">
    <property type="entry name" value="ApaG domain"/>
    <property type="match status" value="1"/>
</dbReference>
<dbReference type="HAMAP" id="MF_00791">
    <property type="entry name" value="ApaG"/>
    <property type="match status" value="1"/>
</dbReference>
<dbReference type="InterPro" id="IPR007474">
    <property type="entry name" value="ApaG_domain"/>
</dbReference>
<dbReference type="InterPro" id="IPR036767">
    <property type="entry name" value="ApaG_sf"/>
</dbReference>
<dbReference type="InterPro" id="IPR023065">
    <property type="entry name" value="Uncharacterised_ApaG"/>
</dbReference>
<dbReference type="NCBIfam" id="NF003967">
    <property type="entry name" value="PRK05461.1"/>
    <property type="match status" value="1"/>
</dbReference>
<dbReference type="PANTHER" id="PTHR14289">
    <property type="entry name" value="F-BOX ONLY PROTEIN 3"/>
    <property type="match status" value="1"/>
</dbReference>
<dbReference type="PANTHER" id="PTHR14289:SF16">
    <property type="entry name" value="POLYMERASE DELTA-INTERACTING PROTEIN 2"/>
    <property type="match status" value="1"/>
</dbReference>
<dbReference type="Pfam" id="PF04379">
    <property type="entry name" value="DUF525"/>
    <property type="match status" value="1"/>
</dbReference>
<dbReference type="SUPFAM" id="SSF110069">
    <property type="entry name" value="ApaG-like"/>
    <property type="match status" value="1"/>
</dbReference>
<dbReference type="PROSITE" id="PS51087">
    <property type="entry name" value="APAG"/>
    <property type="match status" value="1"/>
</dbReference>
<proteinExistence type="inferred from homology"/>
<sequence length="125" mass="14117">MIEQPRICVQVQSIYVETQSIPEEERFVFAYTVTVRNLGRSNVQLLGRYWLITNSNGRQTEVQGEGVIGEQPLILPGNEFQYTSGAVLETPLGTMEGHYEMIDHLGQAFRTVIPVFRLAIPALIH</sequence>
<gene>
    <name evidence="1" type="primary">apaG</name>
    <name type="ordered locus">YPTB0632</name>
</gene>
<feature type="chain" id="PRO_1000083677" description="Protein ApaG">
    <location>
        <begin position="1"/>
        <end position="125"/>
    </location>
</feature>
<feature type="domain" description="ApaG" evidence="1">
    <location>
        <begin position="1"/>
        <end position="125"/>
    </location>
</feature>